<gene>
    <name type="primary">hbpA</name>
    <name type="synonym">dppA</name>
    <name type="ordered locus">HI_0853</name>
</gene>
<protein>
    <recommendedName>
        <fullName>Heme-binding protein A</fullName>
    </recommendedName>
    <alternativeName>
        <fullName>Hemin-binding lipoprotein</fullName>
    </alternativeName>
</protein>
<proteinExistence type="evidence at protein level"/>
<keyword id="KW-0997">Cell inner membrane</keyword>
<keyword id="KW-1003">Cell membrane</keyword>
<keyword id="KW-0903">Direct protein sequencing</keyword>
<keyword id="KW-0449">Lipoprotein</keyword>
<keyword id="KW-0472">Membrane</keyword>
<keyword id="KW-0564">Palmitate</keyword>
<keyword id="KW-1185">Reference proteome</keyword>
<keyword id="KW-0732">Signal</keyword>
<organism>
    <name type="scientific">Haemophilus influenzae (strain ATCC 51907 / DSM 11121 / KW20 / Rd)</name>
    <dbReference type="NCBI Taxonomy" id="71421"/>
    <lineage>
        <taxon>Bacteria</taxon>
        <taxon>Pseudomonadati</taxon>
        <taxon>Pseudomonadota</taxon>
        <taxon>Gammaproteobacteria</taxon>
        <taxon>Pasteurellales</taxon>
        <taxon>Pasteurellaceae</taxon>
        <taxon>Haemophilus</taxon>
    </lineage>
</organism>
<name>HBPA_HAEIN</name>
<reference key="1">
    <citation type="journal article" date="1992" name="Infect. Immun.">
        <title>The hbpA gene of Haemophilus influenzae type b encodes a heme-binding lipoprotein conserved among heme-dependent Haemophilus species.</title>
        <authorList>
            <person name="Hanson M.S."/>
            <person name="Slaughter C."/>
            <person name="Hansen E.J."/>
        </authorList>
    </citation>
    <scope>NUCLEOTIDE SEQUENCE [GENOMIC DNA]</scope>
    <scope>PARTIAL PROTEIN SEQUENCE</scope>
    <source>
        <strain>DL42 / Serotype B</strain>
    </source>
</reference>
<reference key="2">
    <citation type="journal article" date="1995" name="Science">
        <title>Whole-genome random sequencing and assembly of Haemophilus influenzae Rd.</title>
        <authorList>
            <person name="Fleischmann R.D."/>
            <person name="Adams M.D."/>
            <person name="White O."/>
            <person name="Clayton R.A."/>
            <person name="Kirkness E.F."/>
            <person name="Kerlavage A.R."/>
            <person name="Bult C.J."/>
            <person name="Tomb J.-F."/>
            <person name="Dougherty B.A."/>
            <person name="Merrick J.M."/>
            <person name="McKenney K."/>
            <person name="Sutton G.G."/>
            <person name="FitzHugh W."/>
            <person name="Fields C.A."/>
            <person name="Gocayne J.D."/>
            <person name="Scott J.D."/>
            <person name="Shirley R."/>
            <person name="Liu L.-I."/>
            <person name="Glodek A."/>
            <person name="Kelley J.M."/>
            <person name="Weidman J.F."/>
            <person name="Phillips C.A."/>
            <person name="Spriggs T."/>
            <person name="Hedblom E."/>
            <person name="Cotton M.D."/>
            <person name="Utterback T.R."/>
            <person name="Hanna M.C."/>
            <person name="Nguyen D.T."/>
            <person name="Saudek D.M."/>
            <person name="Brandon R.C."/>
            <person name="Fine L.D."/>
            <person name="Fritchman J.L."/>
            <person name="Fuhrmann J.L."/>
            <person name="Geoghagen N.S.M."/>
            <person name="Gnehm C.L."/>
            <person name="McDonald L.A."/>
            <person name="Small K.V."/>
            <person name="Fraser C.M."/>
            <person name="Smith H.O."/>
            <person name="Venter J.C."/>
        </authorList>
    </citation>
    <scope>NUCLEOTIDE SEQUENCE [LARGE SCALE GENOMIC DNA]</scope>
    <source>
        <strain>ATCC 51907 / DSM 11121 / KW20 / Rd</strain>
    </source>
</reference>
<reference key="3">
    <citation type="journal article" date="1991" name="Mol. Microbiol.">
        <title>Molecular cloning, partial purification, and characterization of a haemin-binding lipoprotein from Haemophilus influenzae type b.</title>
        <authorList>
            <person name="Hanson M.S."/>
            <person name="Hansen E.J."/>
        </authorList>
    </citation>
    <scope>POSSIBLE FUNCTION</scope>
    <scope>SUBCELLULAR LOCATION</scope>
    <source>
        <strain>DL42 / Serotype B</strain>
    </source>
</reference>
<accession>P33950</accession>
<comment type="function">
    <text>Important role in heme acquisition or metabolism.</text>
</comment>
<comment type="subcellular location">
    <subcellularLocation>
        <location evidence="2">Cell inner membrane</location>
        <topology evidence="1 2">Lipid-anchor</topology>
    </subcellularLocation>
</comment>
<comment type="similarity">
    <text evidence="3">Belongs to the bacterial solute-binding protein 5 family.</text>
</comment>
<comment type="sequence caution" evidence="3">
    <conflict type="erroneous initiation">
        <sequence resource="EMBL-CDS" id="AAC22512"/>
    </conflict>
</comment>
<sequence length="547" mass="60661">MKLKATLTLAAATLVLAACDQSSSANKSTAQTEAKSSSNNTFVYCTAKAPLGFSPALIIEGTSYNASSQQVYNRLVEFKKGSTDIEPALAESWEISDDGLSYTFHLRKGVKFHTTKEFTPTRDFNADDVVFSFQRQLDPNHPYHNVSKGTYPYFKAMKFPELLKSVEKVDDNTIRITLNKTDATFLASLGMDFISIYSAEYADSMLKAGKPETLDSRPVGTGPFVFVDYKTDQAIQYVAHENYWKGRTPLDRLVISIVPDATTRYAKLQAGTCDLILFPNVADLAKMKTDPKVQLLEQKGLNVAYIAFNTEKAPFDNVKVRQALNYAVDKKAIIEAVYQGAGTSAKNPLPPTIWSYNDEIQDYPYDPEKAKQLLAEAGYPNGFETDFWIQPVIRASNPNPKRMAELIMADWAKIGVKTNPVTYEWADYRKRAKEGELTAGIFGWSGDNGDPDNFLSPLLGSSNIGNSNMARFNNSEFDALLNEAIGLTNKEERAKLYKQAQVIVHNQAPWIPVAHSVGFAPLSPRVKGYVQSPFGYDAFYGVSVDGK</sequence>
<dbReference type="EMBL" id="M88134">
    <property type="protein sequence ID" value="AAA73214.1"/>
    <property type="status" value="ALT_SEQ"/>
    <property type="molecule type" value="Genomic_DNA"/>
</dbReference>
<dbReference type="EMBL" id="M84028">
    <property type="protein sequence ID" value="AAA24962.1"/>
    <property type="molecule type" value="Genomic_DNA"/>
</dbReference>
<dbReference type="EMBL" id="L42023">
    <property type="protein sequence ID" value="AAC22512.1"/>
    <property type="status" value="ALT_INIT"/>
    <property type="molecule type" value="Genomic_DNA"/>
</dbReference>
<dbReference type="PIR" id="D64098">
    <property type="entry name" value="D64098"/>
</dbReference>
<dbReference type="PIR" id="T45066">
    <property type="entry name" value="T45066"/>
</dbReference>
<dbReference type="RefSeq" id="NP_439013.1">
    <property type="nucleotide sequence ID" value="NC_000907.1"/>
</dbReference>
<dbReference type="SMR" id="P33950"/>
<dbReference type="STRING" id="71421.HI_0853"/>
<dbReference type="TCDB" id="3.A.1.5.27">
    <property type="family name" value="the atp-binding cassette (abc) superfamily"/>
</dbReference>
<dbReference type="EnsemblBacteria" id="AAC22512">
    <property type="protein sequence ID" value="AAC22512"/>
    <property type="gene ID" value="HI_0853"/>
</dbReference>
<dbReference type="KEGG" id="hin:HI_0853"/>
<dbReference type="PATRIC" id="fig|71421.8.peg.894"/>
<dbReference type="eggNOG" id="COG0747">
    <property type="taxonomic scope" value="Bacteria"/>
</dbReference>
<dbReference type="HOGENOM" id="CLU_017028_7_0_6"/>
<dbReference type="OrthoDB" id="9801912at2"/>
<dbReference type="PhylomeDB" id="P33950"/>
<dbReference type="Proteomes" id="UP000000579">
    <property type="component" value="Chromosome"/>
</dbReference>
<dbReference type="GO" id="GO:0043190">
    <property type="term" value="C:ATP-binding cassette (ABC) transporter complex"/>
    <property type="evidence" value="ECO:0007669"/>
    <property type="project" value="InterPro"/>
</dbReference>
<dbReference type="GO" id="GO:0030288">
    <property type="term" value="C:outer membrane-bounded periplasmic space"/>
    <property type="evidence" value="ECO:0000318"/>
    <property type="project" value="GO_Central"/>
</dbReference>
<dbReference type="GO" id="GO:1904680">
    <property type="term" value="F:peptide transmembrane transporter activity"/>
    <property type="evidence" value="ECO:0000318"/>
    <property type="project" value="GO_Central"/>
</dbReference>
<dbReference type="GO" id="GO:0042938">
    <property type="term" value="P:dipeptide transport"/>
    <property type="evidence" value="ECO:0000318"/>
    <property type="project" value="GO_Central"/>
</dbReference>
<dbReference type="CDD" id="cd08493">
    <property type="entry name" value="PBP2_DppA_like"/>
    <property type="match status" value="1"/>
</dbReference>
<dbReference type="FunFam" id="3.10.105.10:FF:000002">
    <property type="entry name" value="Dipeptide ABC transporter, substrate-binding protein"/>
    <property type="match status" value="1"/>
</dbReference>
<dbReference type="FunFam" id="3.40.190.10:FF:000036">
    <property type="entry name" value="Dipeptide ABC transporter, substrate-binding protein"/>
    <property type="match status" value="1"/>
</dbReference>
<dbReference type="FunFam" id="3.90.76.10:FF:000002">
    <property type="entry name" value="Dipeptide ABC transporter, substrate-binding protein"/>
    <property type="match status" value="1"/>
</dbReference>
<dbReference type="Gene3D" id="3.90.76.10">
    <property type="entry name" value="Dipeptide-binding Protein, Domain 1"/>
    <property type="match status" value="1"/>
</dbReference>
<dbReference type="Gene3D" id="3.10.105.10">
    <property type="entry name" value="Dipeptide-binding Protein, Domain 3"/>
    <property type="match status" value="1"/>
</dbReference>
<dbReference type="Gene3D" id="3.40.190.10">
    <property type="entry name" value="Periplasmic binding protein-like II"/>
    <property type="match status" value="1"/>
</dbReference>
<dbReference type="InterPro" id="IPR030678">
    <property type="entry name" value="Peptide/Ni-bd"/>
</dbReference>
<dbReference type="InterPro" id="IPR039424">
    <property type="entry name" value="SBP_5"/>
</dbReference>
<dbReference type="InterPro" id="IPR023765">
    <property type="entry name" value="SBP_5_CS"/>
</dbReference>
<dbReference type="InterPro" id="IPR000914">
    <property type="entry name" value="SBP_5_dom"/>
</dbReference>
<dbReference type="PANTHER" id="PTHR30290:SF38">
    <property type="entry name" value="D,D-DIPEPTIDE-BINDING PERIPLASMIC PROTEIN DDPA-RELATED"/>
    <property type="match status" value="1"/>
</dbReference>
<dbReference type="PANTHER" id="PTHR30290">
    <property type="entry name" value="PERIPLASMIC BINDING COMPONENT OF ABC TRANSPORTER"/>
    <property type="match status" value="1"/>
</dbReference>
<dbReference type="Pfam" id="PF00496">
    <property type="entry name" value="SBP_bac_5"/>
    <property type="match status" value="1"/>
</dbReference>
<dbReference type="PIRSF" id="PIRSF002741">
    <property type="entry name" value="MppA"/>
    <property type="match status" value="1"/>
</dbReference>
<dbReference type="SUPFAM" id="SSF53850">
    <property type="entry name" value="Periplasmic binding protein-like II"/>
    <property type="match status" value="1"/>
</dbReference>
<dbReference type="PROSITE" id="PS51257">
    <property type="entry name" value="PROKAR_LIPOPROTEIN"/>
    <property type="match status" value="1"/>
</dbReference>
<dbReference type="PROSITE" id="PS01040">
    <property type="entry name" value="SBP_BACTERIAL_5"/>
    <property type="match status" value="1"/>
</dbReference>
<evidence type="ECO:0000255" key="1">
    <source>
        <dbReference type="PROSITE-ProRule" id="PRU00303"/>
    </source>
</evidence>
<evidence type="ECO:0000269" key="2">
    <source>
    </source>
</evidence>
<evidence type="ECO:0000305" key="3"/>
<feature type="signal peptide" evidence="3">
    <location>
        <begin position="1"/>
        <end position="18"/>
    </location>
</feature>
<feature type="chain" id="PRO_0000031790" description="Heme-binding protein A">
    <location>
        <begin position="19"/>
        <end position="547"/>
    </location>
</feature>
<feature type="lipid moiety-binding region" description="N-palmitoyl cysteine" evidence="3">
    <location>
        <position position="19"/>
    </location>
</feature>
<feature type="lipid moiety-binding region" description="S-diacylglycerol cysteine" evidence="3">
    <location>
        <position position="19"/>
    </location>
</feature>
<feature type="sequence variant" description="In strain: DL42.">
    <original>KA</original>
    <variation>NS</variation>
    <location>
        <begin position="48"/>
        <end position="49"/>
    </location>
</feature>
<feature type="sequence variant" description="In strain: DL42.">
    <original>T</original>
    <variation>N</variation>
    <location>
        <position position="181"/>
    </location>
</feature>
<feature type="sequence variant" description="In strain: DL42.">
    <original>H</original>
    <variation>N</variation>
    <location>
        <position position="240"/>
    </location>
</feature>
<feature type="sequence variant" description="In strain: DL42.">
    <original>T</original>
    <variation>I</variation>
    <location>
        <position position="343"/>
    </location>
</feature>
<feature type="sequence variant" description="In strain: DL42.">
    <original>A</original>
    <variation>V</variation>
    <location>
        <position position="375"/>
    </location>
</feature>